<gene>
    <name type="primary">LAS2</name>
    <name type="synonym">C18orf54</name>
</gene>
<comment type="function">
    <text evidence="1">Might play a role in cell proliferation.</text>
</comment>
<comment type="interaction">
    <interactant intactId="EBI-749878">
        <id>Q8IYD9</id>
    </interactant>
    <interactant intactId="EBI-17183751">
        <id>X5D778</id>
        <label>ANKRD11</label>
    </interactant>
    <organismsDiffer>false</organismsDiffer>
    <experiments>3</experiments>
</comment>
<comment type="interaction">
    <interactant intactId="EBI-749878">
        <id>Q8IYD9</id>
    </interactant>
    <interactant intactId="EBI-9640137">
        <id>Q9NXG0-2</id>
        <label>CNTLN</label>
    </interactant>
    <organismsDiffer>false</organismsDiffer>
    <experiments>3</experiments>
</comment>
<comment type="interaction">
    <interactant intactId="EBI-749878">
        <id>Q8IYD9</id>
    </interactant>
    <interactant intactId="EBI-744099">
        <id>Q9H0I2</id>
        <label>ENKD1</label>
    </interactant>
    <organismsDiffer>false</organismsDiffer>
    <experiments>3</experiments>
</comment>
<comment type="interaction">
    <interactant intactId="EBI-749878">
        <id>Q8IYD9</id>
    </interactant>
    <interactant intactId="EBI-1955541">
        <id>Q53GS7</id>
        <label>GLE1</label>
    </interactant>
    <organismsDiffer>false</organismsDiffer>
    <experiments>3</experiments>
</comment>
<comment type="interaction">
    <interactant intactId="EBI-749878">
        <id>Q8IYD9</id>
    </interactant>
    <interactant intactId="EBI-7116203">
        <id>O75031</id>
        <label>HSF2BP</label>
    </interactant>
    <organismsDiffer>false</organismsDiffer>
    <experiments>3</experiments>
</comment>
<comment type="interaction">
    <interactant intactId="EBI-749878">
        <id>Q8IYD9</id>
    </interactant>
    <interactant intactId="EBI-739552">
        <id>P43364</id>
        <label>MAGEA11</label>
    </interactant>
    <organismsDiffer>false</organismsDiffer>
    <experiments>4</experiments>
</comment>
<comment type="interaction">
    <interactant intactId="EBI-749878">
        <id>Q8IYD9</id>
    </interactant>
    <interactant intactId="EBI-746778">
        <id>Q96A72</id>
        <label>MAGOHB</label>
    </interactant>
    <organismsDiffer>false</organismsDiffer>
    <experiments>3</experiments>
</comment>
<comment type="interaction">
    <interactant intactId="EBI-749878">
        <id>Q8IYD9</id>
    </interactant>
    <interactant intactId="EBI-5235340">
        <id>Q7Z699</id>
        <label>SPRED1</label>
    </interactant>
    <organismsDiffer>false</organismsDiffer>
    <experiments>3</experiments>
</comment>
<comment type="interaction">
    <interactant intactId="EBI-749878">
        <id>Q8IYD9</id>
    </interactant>
    <interactant intactId="EBI-6116822">
        <id>Q8N3L3</id>
        <label>TXLNB</label>
    </interactant>
    <organismsDiffer>false</organismsDiffer>
    <experiments>3</experiments>
</comment>
<comment type="subcellular location">
    <subcellularLocation>
        <location evidence="6">Secreted</location>
    </subcellularLocation>
</comment>
<comment type="alternative products">
    <event type="alternative splicing"/>
    <isoform>
        <id>Q8IYD9-1</id>
        <name>1</name>
        <sequence type="displayed"/>
    </isoform>
    <isoform>
        <id>Q8IYD9-2</id>
        <name>2</name>
        <sequence type="described" ref="VSP_015085"/>
    </isoform>
</comment>
<comment type="sequence caution" evidence="6">
    <conflict type="erroneous initiation">
        <sequence resource="EMBL-CDS" id="BAC86570"/>
    </conflict>
    <text>Truncated N-terminus.</text>
</comment>
<accession>Q8IYD9</accession>
<accession>I7HFJ6</accession>
<accession>Q6MZU3</accession>
<accession>Q6ZTL6</accession>
<sequence length="372" mass="41811">MAKSKTKHRLCSQESSVSALLASCTLSGSNSSNSDGSFHYKDKLYRSASQALQAYIDDFDLGQIYPGASTGKINIDEDFTNMSQFCNYIYKPNNAFENLDHKKHSNFISCRRHTVNDIDSMSLTTDDLLRLPADGSFSYTYVGPSHRTSKKNKKCRGRLGSLDIEKNPHFQGPYTSMGKDNFVTPVIRSNINGKQCGDKIELLILKAKRNLEQCTEELPKSMKKDDSPCSLDKLEADRSWENIPVTFKSPVPVNSDDSPQQTSRAKSAKGVLEDFLNNDNQSCTLSGGKHHGPVEALKQMLFNLQAVQERFNQNKTTDPKEEIKQVSEDDFSKLQLKESMIPITRSLQKALHHLSRLRDLVDDTNGERSPKM</sequence>
<organism>
    <name type="scientific">Homo sapiens</name>
    <name type="common">Human</name>
    <dbReference type="NCBI Taxonomy" id="9606"/>
    <lineage>
        <taxon>Eukaryota</taxon>
        <taxon>Metazoa</taxon>
        <taxon>Chordata</taxon>
        <taxon>Craniata</taxon>
        <taxon>Vertebrata</taxon>
        <taxon>Euteleostomi</taxon>
        <taxon>Mammalia</taxon>
        <taxon>Eutheria</taxon>
        <taxon>Euarchontoglires</taxon>
        <taxon>Primates</taxon>
        <taxon>Haplorrhini</taxon>
        <taxon>Catarrhini</taxon>
        <taxon>Hominidae</taxon>
        <taxon>Homo</taxon>
    </lineage>
</organism>
<proteinExistence type="evidence at protein level"/>
<name>LAS2_HUMAN</name>
<evidence type="ECO:0000250" key="1"/>
<evidence type="ECO:0000255" key="2"/>
<evidence type="ECO:0000256" key="3">
    <source>
        <dbReference type="SAM" id="MobiDB-lite"/>
    </source>
</evidence>
<evidence type="ECO:0000303" key="4">
    <source>
    </source>
</evidence>
<evidence type="ECO:0000303" key="5">
    <source ref="1"/>
</evidence>
<evidence type="ECO:0000305" key="6"/>
<evidence type="ECO:0007744" key="7">
    <source>
    </source>
</evidence>
<dbReference type="EMBL" id="AB353076">
    <property type="protein sequence ID" value="BAM34476.1"/>
    <property type="molecule type" value="mRNA"/>
</dbReference>
<dbReference type="EMBL" id="AB353077">
    <property type="protein sequence ID" value="BAM34477.1"/>
    <property type="molecule type" value="mRNA"/>
</dbReference>
<dbReference type="EMBL" id="AB267906">
    <property type="protein sequence ID" value="BAM35939.1"/>
    <property type="molecule type" value="mRNA"/>
</dbReference>
<dbReference type="EMBL" id="BX640877">
    <property type="protein sequence ID" value="CAE45934.1"/>
    <property type="molecule type" value="mRNA"/>
</dbReference>
<dbReference type="EMBL" id="CH471096">
    <property type="protein sequence ID" value="EAW63006.1"/>
    <property type="molecule type" value="Genomic_DNA"/>
</dbReference>
<dbReference type="EMBL" id="BC036054">
    <property type="protein sequence ID" value="AAH36054.1"/>
    <property type="molecule type" value="mRNA"/>
</dbReference>
<dbReference type="EMBL" id="AK126503">
    <property type="protein sequence ID" value="BAC86570.1"/>
    <property type="status" value="ALT_INIT"/>
    <property type="molecule type" value="mRNA"/>
</dbReference>
<dbReference type="CCDS" id="CCDS11956.1">
    <molecule id="Q8IYD9-1"/>
</dbReference>
<dbReference type="CCDS" id="CCDS74223.1">
    <molecule id="Q8IYD9-2"/>
</dbReference>
<dbReference type="RefSeq" id="NP_001275909.1">
    <molecule id="Q8IYD9-2"/>
    <property type="nucleotide sequence ID" value="NM_001288980.1"/>
</dbReference>
<dbReference type="RefSeq" id="NP_001275910.1">
    <molecule id="Q8IYD9-2"/>
    <property type="nucleotide sequence ID" value="NM_001288981.1"/>
</dbReference>
<dbReference type="RefSeq" id="NP_775800.3">
    <molecule id="Q8IYD9-1"/>
    <property type="nucleotide sequence ID" value="NM_173529.5"/>
</dbReference>
<dbReference type="RefSeq" id="XP_005258258.1">
    <property type="nucleotide sequence ID" value="XM_005258201.1"/>
</dbReference>
<dbReference type="RefSeq" id="XP_016881056.1">
    <molecule id="Q8IYD9-2"/>
    <property type="nucleotide sequence ID" value="XM_017025567.1"/>
</dbReference>
<dbReference type="SMR" id="Q8IYD9"/>
<dbReference type="BioGRID" id="127828">
    <property type="interactions" value="13"/>
</dbReference>
<dbReference type="FunCoup" id="Q8IYD9">
    <property type="interactions" value="624"/>
</dbReference>
<dbReference type="IntAct" id="Q8IYD9">
    <property type="interactions" value="12"/>
</dbReference>
<dbReference type="MINT" id="Q8IYD9"/>
<dbReference type="iPTMnet" id="Q8IYD9"/>
<dbReference type="PhosphoSitePlus" id="Q8IYD9"/>
<dbReference type="BioMuta" id="C18orf54"/>
<dbReference type="DMDM" id="73620600"/>
<dbReference type="MassIVE" id="Q8IYD9"/>
<dbReference type="PeptideAtlas" id="Q8IYD9"/>
<dbReference type="ProteomicsDB" id="71160">
    <molecule id="Q8IYD9-1"/>
</dbReference>
<dbReference type="ProteomicsDB" id="71161">
    <molecule id="Q8IYD9-2"/>
</dbReference>
<dbReference type="Antibodypedia" id="22759">
    <property type="antibodies" value="96 antibodies from 15 providers"/>
</dbReference>
<dbReference type="DNASU" id="162681"/>
<dbReference type="Ensembl" id="ENST00000300091.5">
    <molecule id="Q8IYD9-1"/>
    <property type="protein sequence ID" value="ENSP00000300091.5"/>
    <property type="gene ID" value="ENSG00000166845.15"/>
</dbReference>
<dbReference type="Ensembl" id="ENST00000382911.8">
    <molecule id="Q8IYD9-2"/>
    <property type="protein sequence ID" value="ENSP00000372368.4"/>
    <property type="gene ID" value="ENSG00000166845.15"/>
</dbReference>
<dbReference type="Ensembl" id="ENST00000620105.5">
    <molecule id="Q8IYD9-2"/>
    <property type="protein sequence ID" value="ENSP00000477654.1"/>
    <property type="gene ID" value="ENSG00000166845.15"/>
</dbReference>
<dbReference type="GeneID" id="162681"/>
<dbReference type="KEGG" id="hsa:162681"/>
<dbReference type="MANE-Select" id="ENST00000620105.5">
    <molecule id="Q8IYD9-2"/>
    <property type="protein sequence ID" value="ENSP00000477654.1"/>
    <property type="RefSeq nucleotide sequence ID" value="NM_001288980.2"/>
    <property type="RefSeq protein sequence ID" value="NP_001275909.1"/>
</dbReference>
<dbReference type="UCSC" id="uc002lfo.6">
    <molecule id="Q8IYD9-1"/>
    <property type="organism name" value="human"/>
</dbReference>
<dbReference type="AGR" id="HGNC:13796"/>
<dbReference type="CTD" id="162681"/>
<dbReference type="DisGeNET" id="162681"/>
<dbReference type="GeneCards" id="C18orf54"/>
<dbReference type="HGNC" id="HGNC:13796">
    <property type="gene designation" value="C18orf54"/>
</dbReference>
<dbReference type="HPA" id="ENSG00000166845">
    <property type="expression patterns" value="Tissue enriched (testis)"/>
</dbReference>
<dbReference type="MIM" id="613258">
    <property type="type" value="gene"/>
</dbReference>
<dbReference type="neXtProt" id="NX_Q8IYD9"/>
<dbReference type="OpenTargets" id="ENSG00000166845"/>
<dbReference type="PharmGKB" id="PA134942612"/>
<dbReference type="VEuPathDB" id="HostDB:ENSG00000166845"/>
<dbReference type="eggNOG" id="ENOG502RM40">
    <property type="taxonomic scope" value="Eukaryota"/>
</dbReference>
<dbReference type="GeneTree" id="ENSGT00390000008823"/>
<dbReference type="HOGENOM" id="CLU_038585_0_0_1"/>
<dbReference type="InParanoid" id="Q8IYD9"/>
<dbReference type="OMA" id="HRTRKKN"/>
<dbReference type="OrthoDB" id="9934714at2759"/>
<dbReference type="PAN-GO" id="Q8IYD9">
    <property type="GO annotations" value="0 GO annotations based on evolutionary models"/>
</dbReference>
<dbReference type="PhylomeDB" id="Q8IYD9"/>
<dbReference type="TreeFam" id="TF337548"/>
<dbReference type="PathwayCommons" id="Q8IYD9"/>
<dbReference type="SignaLink" id="Q8IYD9"/>
<dbReference type="BioGRID-ORCS" id="162681">
    <property type="hits" value="11 hits in 1148 CRISPR screens"/>
</dbReference>
<dbReference type="ChiTaRS" id="C18orf54">
    <property type="organism name" value="human"/>
</dbReference>
<dbReference type="GenomeRNAi" id="162681"/>
<dbReference type="Pharos" id="Q8IYD9">
    <property type="development level" value="Tbio"/>
</dbReference>
<dbReference type="PRO" id="PR:Q8IYD9"/>
<dbReference type="Proteomes" id="UP000005640">
    <property type="component" value="Chromosome 18"/>
</dbReference>
<dbReference type="RNAct" id="Q8IYD9">
    <property type="molecule type" value="protein"/>
</dbReference>
<dbReference type="Bgee" id="ENSG00000166845">
    <property type="expression patterns" value="Expressed in sperm and 147 other cell types or tissues"/>
</dbReference>
<dbReference type="ExpressionAtlas" id="Q8IYD9">
    <property type="expression patterns" value="baseline and differential"/>
</dbReference>
<dbReference type="GO" id="GO:0005576">
    <property type="term" value="C:extracellular region"/>
    <property type="evidence" value="ECO:0007669"/>
    <property type="project" value="UniProtKB-SubCell"/>
</dbReference>
<dbReference type="GO" id="GO:0008285">
    <property type="term" value="P:negative regulation of cell population proliferation"/>
    <property type="evidence" value="ECO:0007669"/>
    <property type="project" value="Ensembl"/>
</dbReference>
<dbReference type="InterPro" id="IPR052679">
    <property type="entry name" value="Cell_Prolif_Regulator"/>
</dbReference>
<dbReference type="InterPro" id="IPR031587">
    <property type="entry name" value="LAS2"/>
</dbReference>
<dbReference type="PANTHER" id="PTHR35079">
    <property type="entry name" value="LUNG ADENOMA SUSCEPTIBILITY PROTEIN 2"/>
    <property type="match status" value="1"/>
</dbReference>
<dbReference type="PANTHER" id="PTHR35079:SF1">
    <property type="entry name" value="LUNG ADENOMA SUSCEPTIBILITY PROTEIN 2"/>
    <property type="match status" value="1"/>
</dbReference>
<dbReference type="Pfam" id="PF15792">
    <property type="entry name" value="LAS2"/>
    <property type="match status" value="1"/>
</dbReference>
<protein>
    <recommendedName>
        <fullName>Lung adenoma susceptibility protein 2</fullName>
    </recommendedName>
</protein>
<reference key="1">
    <citation type="submission" date="2006-08" db="EMBL/GenBank/DDBJ databases">
        <title>Overexpression of B9838 in bladder cancers.</title>
        <authorList>
            <person name="Katagiri T."/>
            <person name="Harada Y."/>
            <person name="Nakamura Y."/>
        </authorList>
    </citation>
    <scope>NUCLEOTIDE SEQUENCE [MRNA] (ISOFORM 2)</scope>
    <source>
        <tissue>Urinary bladder</tissue>
    </source>
</reference>
<reference key="2">
    <citation type="journal article" date="2007" name="BMC Genomics">
        <title>The full-ORF clone resource of the German cDNA consortium.</title>
        <authorList>
            <person name="Bechtel S."/>
            <person name="Rosenfelder H."/>
            <person name="Duda A."/>
            <person name="Schmidt C.P."/>
            <person name="Ernst U."/>
            <person name="Wellenreuther R."/>
            <person name="Mehrle A."/>
            <person name="Schuster C."/>
            <person name="Bahr A."/>
            <person name="Bloecker H."/>
            <person name="Heubner D."/>
            <person name="Hoerlein A."/>
            <person name="Michel G."/>
            <person name="Wedler H."/>
            <person name="Koehrer K."/>
            <person name="Ottenwaelder B."/>
            <person name="Poustka A."/>
            <person name="Wiemann S."/>
            <person name="Schupp I."/>
        </authorList>
    </citation>
    <scope>NUCLEOTIDE SEQUENCE [LARGE SCALE MRNA] (ISOFORM 1)</scope>
    <source>
        <tissue>Uterine endothelium</tissue>
    </source>
</reference>
<reference key="3">
    <citation type="submission" date="2005-07" db="EMBL/GenBank/DDBJ databases">
        <authorList>
            <person name="Mural R.J."/>
            <person name="Istrail S."/>
            <person name="Sutton G."/>
            <person name="Florea L."/>
            <person name="Halpern A.L."/>
            <person name="Mobarry C.M."/>
            <person name="Lippert R."/>
            <person name="Walenz B."/>
            <person name="Shatkay H."/>
            <person name="Dew I."/>
            <person name="Miller J.R."/>
            <person name="Flanigan M.J."/>
            <person name="Edwards N.J."/>
            <person name="Bolanos R."/>
            <person name="Fasulo D."/>
            <person name="Halldorsson B.V."/>
            <person name="Hannenhalli S."/>
            <person name="Turner R."/>
            <person name="Yooseph S."/>
            <person name="Lu F."/>
            <person name="Nusskern D.R."/>
            <person name="Shue B.C."/>
            <person name="Zheng X.H."/>
            <person name="Zhong F."/>
            <person name="Delcher A.L."/>
            <person name="Huson D.H."/>
            <person name="Kravitz S.A."/>
            <person name="Mouchard L."/>
            <person name="Reinert K."/>
            <person name="Remington K.A."/>
            <person name="Clark A.G."/>
            <person name="Waterman M.S."/>
            <person name="Eichler E.E."/>
            <person name="Adams M.D."/>
            <person name="Hunkapiller M.W."/>
            <person name="Myers E.W."/>
            <person name="Venter J.C."/>
        </authorList>
    </citation>
    <scope>NUCLEOTIDE SEQUENCE [LARGE SCALE GENOMIC DNA]</scope>
</reference>
<reference key="4">
    <citation type="journal article" date="2004" name="Genome Res.">
        <title>The status, quality, and expansion of the NIH full-length cDNA project: the Mammalian Gene Collection (MGC).</title>
        <authorList>
            <consortium name="The MGC Project Team"/>
        </authorList>
    </citation>
    <scope>NUCLEOTIDE SEQUENCE [LARGE SCALE MRNA] (ISOFORM 1)</scope>
    <source>
        <tissue>Testis</tissue>
    </source>
</reference>
<reference key="5">
    <citation type="journal article" date="2004" name="Nat. Genet.">
        <title>Complete sequencing and characterization of 21,243 full-length human cDNAs.</title>
        <authorList>
            <person name="Ota T."/>
            <person name="Suzuki Y."/>
            <person name="Nishikawa T."/>
            <person name="Otsuki T."/>
            <person name="Sugiyama T."/>
            <person name="Irie R."/>
            <person name="Wakamatsu A."/>
            <person name="Hayashi K."/>
            <person name="Sato H."/>
            <person name="Nagai K."/>
            <person name="Kimura K."/>
            <person name="Makita H."/>
            <person name="Sekine M."/>
            <person name="Obayashi M."/>
            <person name="Nishi T."/>
            <person name="Shibahara T."/>
            <person name="Tanaka T."/>
            <person name="Ishii S."/>
            <person name="Yamamoto J."/>
            <person name="Saito K."/>
            <person name="Kawai Y."/>
            <person name="Isono Y."/>
            <person name="Nakamura Y."/>
            <person name="Nagahari K."/>
            <person name="Murakami K."/>
            <person name="Yasuda T."/>
            <person name="Iwayanagi T."/>
            <person name="Wagatsuma M."/>
            <person name="Shiratori A."/>
            <person name="Sudo H."/>
            <person name="Hosoiri T."/>
            <person name="Kaku Y."/>
            <person name="Kodaira H."/>
            <person name="Kondo H."/>
            <person name="Sugawara M."/>
            <person name="Takahashi M."/>
            <person name="Kanda K."/>
            <person name="Yokoi T."/>
            <person name="Furuya T."/>
            <person name="Kikkawa E."/>
            <person name="Omura Y."/>
            <person name="Abe K."/>
            <person name="Kamihara K."/>
            <person name="Katsuta N."/>
            <person name="Sato K."/>
            <person name="Tanikawa M."/>
            <person name="Yamazaki M."/>
            <person name="Ninomiya K."/>
            <person name="Ishibashi T."/>
            <person name="Yamashita H."/>
            <person name="Murakawa K."/>
            <person name="Fujimori K."/>
            <person name="Tanai H."/>
            <person name="Kimata M."/>
            <person name="Watanabe M."/>
            <person name="Hiraoka S."/>
            <person name="Chiba Y."/>
            <person name="Ishida S."/>
            <person name="Ono Y."/>
            <person name="Takiguchi S."/>
            <person name="Watanabe S."/>
            <person name="Yosida M."/>
            <person name="Hotuta T."/>
            <person name="Kusano J."/>
            <person name="Kanehori K."/>
            <person name="Takahashi-Fujii A."/>
            <person name="Hara H."/>
            <person name="Tanase T.-O."/>
            <person name="Nomura Y."/>
            <person name="Togiya S."/>
            <person name="Komai F."/>
            <person name="Hara R."/>
            <person name="Takeuchi K."/>
            <person name="Arita M."/>
            <person name="Imose N."/>
            <person name="Musashino K."/>
            <person name="Yuuki H."/>
            <person name="Oshima A."/>
            <person name="Sasaki N."/>
            <person name="Aotsuka S."/>
            <person name="Yoshikawa Y."/>
            <person name="Matsunawa H."/>
            <person name="Ichihara T."/>
            <person name="Shiohata N."/>
            <person name="Sano S."/>
            <person name="Moriya S."/>
            <person name="Momiyama H."/>
            <person name="Satoh N."/>
            <person name="Takami S."/>
            <person name="Terashima Y."/>
            <person name="Suzuki O."/>
            <person name="Nakagawa S."/>
            <person name="Senoh A."/>
            <person name="Mizoguchi H."/>
            <person name="Goto Y."/>
            <person name="Shimizu F."/>
            <person name="Wakebe H."/>
            <person name="Hishigaki H."/>
            <person name="Watanabe T."/>
            <person name="Sugiyama A."/>
            <person name="Takemoto M."/>
            <person name="Kawakami B."/>
            <person name="Yamazaki M."/>
            <person name="Watanabe K."/>
            <person name="Kumagai A."/>
            <person name="Itakura S."/>
            <person name="Fukuzumi Y."/>
            <person name="Fujimori Y."/>
            <person name="Komiyama M."/>
            <person name="Tashiro H."/>
            <person name="Tanigami A."/>
            <person name="Fujiwara T."/>
            <person name="Ono T."/>
            <person name="Yamada K."/>
            <person name="Fujii Y."/>
            <person name="Ozaki K."/>
            <person name="Hirao M."/>
            <person name="Ohmori Y."/>
            <person name="Kawabata A."/>
            <person name="Hikiji T."/>
            <person name="Kobatake N."/>
            <person name="Inagaki H."/>
            <person name="Ikema Y."/>
            <person name="Okamoto S."/>
            <person name="Okitani R."/>
            <person name="Kawakami T."/>
            <person name="Noguchi S."/>
            <person name="Itoh T."/>
            <person name="Shigeta K."/>
            <person name="Senba T."/>
            <person name="Matsumura K."/>
            <person name="Nakajima Y."/>
            <person name="Mizuno T."/>
            <person name="Morinaga M."/>
            <person name="Sasaki M."/>
            <person name="Togashi T."/>
            <person name="Oyama M."/>
            <person name="Hata H."/>
            <person name="Watanabe M."/>
            <person name="Komatsu T."/>
            <person name="Mizushima-Sugano J."/>
            <person name="Satoh T."/>
            <person name="Shirai Y."/>
            <person name="Takahashi Y."/>
            <person name="Nakagawa K."/>
            <person name="Okumura K."/>
            <person name="Nagase T."/>
            <person name="Nomura N."/>
            <person name="Kikuchi H."/>
            <person name="Masuho Y."/>
            <person name="Yamashita R."/>
            <person name="Nakai K."/>
            <person name="Yada T."/>
            <person name="Nakamura Y."/>
            <person name="Ohara O."/>
            <person name="Isogai T."/>
            <person name="Sugano S."/>
        </authorList>
    </citation>
    <scope>NUCLEOTIDE SEQUENCE [LARGE SCALE MRNA] OF 88-372 (ISOFORM 2)</scope>
    <source>
        <tissue>Uterus</tissue>
    </source>
</reference>
<reference key="6">
    <citation type="journal article" date="2013" name="J. Proteome Res.">
        <title>Toward a comprehensive characterization of a human cancer cell phosphoproteome.</title>
        <authorList>
            <person name="Zhou H."/>
            <person name="Di Palma S."/>
            <person name="Preisinger C."/>
            <person name="Peng M."/>
            <person name="Polat A.N."/>
            <person name="Heck A.J."/>
            <person name="Mohammed S."/>
        </authorList>
    </citation>
    <scope>PHOSPHORYLATION [LARGE SCALE ANALYSIS] AT SER-161</scope>
    <scope>IDENTIFICATION BY MASS SPECTROMETRY [LARGE SCALE ANALYSIS]</scope>
    <source>
        <tissue>Erythroleukemia</tissue>
    </source>
</reference>
<keyword id="KW-0025">Alternative splicing</keyword>
<keyword id="KW-0597">Phosphoprotein</keyword>
<keyword id="KW-1267">Proteomics identification</keyword>
<keyword id="KW-1185">Reference proteome</keyword>
<keyword id="KW-0964">Secreted</keyword>
<keyword id="KW-0732">Signal</keyword>
<feature type="signal peptide" evidence="2">
    <location>
        <begin position="1"/>
        <end position="31"/>
    </location>
</feature>
<feature type="chain" id="PRO_0000019561" description="Lung adenoma susceptibility protein 2">
    <location>
        <begin position="32"/>
        <end position="372"/>
    </location>
</feature>
<feature type="region of interest" description="Disordered" evidence="3">
    <location>
        <begin position="248"/>
        <end position="268"/>
    </location>
</feature>
<feature type="compositionally biased region" description="Polar residues" evidence="3">
    <location>
        <begin position="255"/>
        <end position="265"/>
    </location>
</feature>
<feature type="modified residue" description="Phosphoserine" evidence="7">
    <location>
        <position position="161"/>
    </location>
</feature>
<feature type="splice variant" id="VSP_015085" description="In isoform 2." evidence="4 5">
    <original>G</original>
    <variation>GRLKNPKLMNRTNNCISESSLSFPKKSSFKDSSEHSLEKNYPRWLTSQKSDLNVSGITSIPDFKYPVWLHNQDLLPDANSQRVYQIFKDDQCSPRHSHQAQGTSRLINKLDCFEYAFEPSNFSNSLSDDKELVNEYKCDFEHSQCQCENPLLPGQSTKPFSG</variation>
    <location>
        <position position="197"/>
    </location>
</feature>
<feature type="sequence variant" id="VAR_050903" description="In dbSNP:rs1657907.">
    <original>R</original>
    <variation>P</variation>
    <location>
        <position position="147"/>
    </location>
</feature>
<feature type="sequence variant" id="VAR_050904" description="In dbSNP:rs16958096.">
    <original>C</original>
    <variation>F</variation>
    <location>
        <position position="196"/>
    </location>
</feature>
<feature type="sequence conflict" description="In Ref. 2; CAE45934." evidence="6" ref="2">
    <original>K</original>
    <variation>E</variation>
    <location>
        <position position="102"/>
    </location>
</feature>
<feature type="sequence conflict" description="In Ref. 2; CAE45934." evidence="6" ref="2">
    <original>T</original>
    <variation>I</variation>
    <location>
        <position position="114"/>
    </location>
</feature>